<sequence length="541" mass="61245">MDSKRSLLFMALLFISFLIYQQWQVDYNTPKPEVTEQAQVSEVNSTALTATSDIANDTQAKGRVITLENDVFRLKVNTLGGDVIGSELLNYDAELHSSAPFVLLQNNADKVYIAQSGLVGKNGIDSRAGRANYQVEGDVFKLAEGQQELKVPLIFEKDGVIYRKVFVLKPGSYALEVNFEITNQSPKPIELVPYAQLTHTLVESSGSMAMPTYTGGAYSSSETNYKKYSFEDMEKADLDIHTKAGWVALLQHYFVSAWIPNQDANNTLYTLTNTKKHLGSIGYRSAPIVIENGATETIHTQLWTGPKLQDQMADVANHLDLTVDYGWAWFIAKPLFKLLTLIQSLVQNWGLAIIGVTLVVKAVLYPLTKAQYTSMAKMRMLQPKLQEMRERFGEDRQRMSQEMMKLYKEEKVNPLGGCLPILLQMPIFIALYWTFMEAVELRHAPFFGWVQDLSAQDPYFILPILMGASMFLLQKMSPTPVADPMQQKVMTFMPLIFMVFFLFFPAGLVLYWLASNLITIAQQWLIYRGLEKKGLHTRVKK</sequence>
<feature type="chain" id="PRO_1000187673" description="Membrane protein insertase YidC">
    <location>
        <begin position="1"/>
        <end position="541"/>
    </location>
</feature>
<feature type="transmembrane region" description="Helical" evidence="1">
    <location>
        <begin position="7"/>
        <end position="27"/>
    </location>
</feature>
<feature type="transmembrane region" description="Helical" evidence="1">
    <location>
        <begin position="345"/>
        <end position="365"/>
    </location>
</feature>
<feature type="transmembrane region" description="Helical" evidence="1">
    <location>
        <begin position="415"/>
        <end position="435"/>
    </location>
</feature>
<feature type="transmembrane region" description="Helical" evidence="1">
    <location>
        <begin position="453"/>
        <end position="473"/>
    </location>
</feature>
<feature type="transmembrane region" description="Helical" evidence="1">
    <location>
        <begin position="492"/>
        <end position="512"/>
    </location>
</feature>
<reference key="1">
    <citation type="submission" date="2008-02" db="EMBL/GenBank/DDBJ databases">
        <title>Complete sequence of Haemophilus somnus 2336.</title>
        <authorList>
            <consortium name="US DOE Joint Genome Institute"/>
            <person name="Siddaramappa S."/>
            <person name="Duncan A.J."/>
            <person name="Challacombe J.F."/>
            <person name="Rainey D."/>
            <person name="Gillaspy A.F."/>
            <person name="Carson M."/>
            <person name="Gipson J."/>
            <person name="Gipson M."/>
            <person name="Bruce D."/>
            <person name="Detter J.C."/>
            <person name="Han C.S."/>
            <person name="Land M."/>
            <person name="Tapia R."/>
            <person name="Thompson L.S."/>
            <person name="Orvis J."/>
            <person name="Zaitshik J."/>
            <person name="Barnes G."/>
            <person name="Brettin T.S."/>
            <person name="Dyer D.W."/>
            <person name="Inzana T.J."/>
        </authorList>
    </citation>
    <scope>NUCLEOTIDE SEQUENCE [LARGE SCALE GENOMIC DNA]</scope>
    <source>
        <strain>2336</strain>
    </source>
</reference>
<accession>B0URU3</accession>
<proteinExistence type="inferred from homology"/>
<keyword id="KW-0997">Cell inner membrane</keyword>
<keyword id="KW-1003">Cell membrane</keyword>
<keyword id="KW-0143">Chaperone</keyword>
<keyword id="KW-0472">Membrane</keyword>
<keyword id="KW-0653">Protein transport</keyword>
<keyword id="KW-0812">Transmembrane</keyword>
<keyword id="KW-1133">Transmembrane helix</keyword>
<keyword id="KW-0813">Transport</keyword>
<organism>
    <name type="scientific">Histophilus somni (strain 2336)</name>
    <name type="common">Haemophilus somnus</name>
    <dbReference type="NCBI Taxonomy" id="228400"/>
    <lineage>
        <taxon>Bacteria</taxon>
        <taxon>Pseudomonadati</taxon>
        <taxon>Pseudomonadota</taxon>
        <taxon>Gammaproteobacteria</taxon>
        <taxon>Pasteurellales</taxon>
        <taxon>Pasteurellaceae</taxon>
        <taxon>Histophilus</taxon>
    </lineage>
</organism>
<comment type="function">
    <text evidence="1">Required for the insertion and/or proper folding and/or complex formation of integral membrane proteins into the membrane. Involved in integration of membrane proteins that insert both dependently and independently of the Sec translocase complex, as well as at least some lipoproteins. Aids folding of multispanning membrane proteins.</text>
</comment>
<comment type="subunit">
    <text evidence="1">Interacts with the Sec translocase complex via SecD. Specifically interacts with transmembrane segments of nascent integral membrane proteins during membrane integration.</text>
</comment>
<comment type="subcellular location">
    <subcellularLocation>
        <location evidence="1">Cell inner membrane</location>
        <topology evidence="1">Multi-pass membrane protein</topology>
    </subcellularLocation>
</comment>
<comment type="similarity">
    <text evidence="1">Belongs to the OXA1/ALB3/YidC family. Type 1 subfamily.</text>
</comment>
<protein>
    <recommendedName>
        <fullName evidence="1">Membrane protein insertase YidC</fullName>
    </recommendedName>
    <alternativeName>
        <fullName evidence="1">Foldase YidC</fullName>
    </alternativeName>
    <alternativeName>
        <fullName evidence="1">Membrane integrase YidC</fullName>
    </alternativeName>
    <alternativeName>
        <fullName evidence="1">Membrane protein YidC</fullName>
    </alternativeName>
</protein>
<name>YIDC_HISS2</name>
<gene>
    <name evidence="1" type="primary">yidC</name>
    <name type="ordered locus">HSM_2018</name>
</gene>
<dbReference type="EMBL" id="CP000947">
    <property type="protein sequence ID" value="ACA31820.1"/>
    <property type="molecule type" value="Genomic_DNA"/>
</dbReference>
<dbReference type="RefSeq" id="WP_012341073.1">
    <property type="nucleotide sequence ID" value="NC_010519.1"/>
</dbReference>
<dbReference type="SMR" id="B0URU3"/>
<dbReference type="STRING" id="228400.HSM_2018"/>
<dbReference type="GeneID" id="31488329"/>
<dbReference type="KEGG" id="hsm:HSM_2018"/>
<dbReference type="HOGENOM" id="CLU_016535_3_0_6"/>
<dbReference type="GO" id="GO:0005886">
    <property type="term" value="C:plasma membrane"/>
    <property type="evidence" value="ECO:0007669"/>
    <property type="project" value="UniProtKB-SubCell"/>
</dbReference>
<dbReference type="GO" id="GO:0032977">
    <property type="term" value="F:membrane insertase activity"/>
    <property type="evidence" value="ECO:0007669"/>
    <property type="project" value="InterPro"/>
</dbReference>
<dbReference type="GO" id="GO:0051205">
    <property type="term" value="P:protein insertion into membrane"/>
    <property type="evidence" value="ECO:0007669"/>
    <property type="project" value="TreeGrafter"/>
</dbReference>
<dbReference type="GO" id="GO:0015031">
    <property type="term" value="P:protein transport"/>
    <property type="evidence" value="ECO:0007669"/>
    <property type="project" value="UniProtKB-KW"/>
</dbReference>
<dbReference type="CDD" id="cd20070">
    <property type="entry name" value="5TM_YidC_Alb3"/>
    <property type="match status" value="1"/>
</dbReference>
<dbReference type="CDD" id="cd19961">
    <property type="entry name" value="EcYidC-like_peri"/>
    <property type="match status" value="1"/>
</dbReference>
<dbReference type="Gene3D" id="2.70.98.90">
    <property type="match status" value="1"/>
</dbReference>
<dbReference type="HAMAP" id="MF_01810">
    <property type="entry name" value="YidC_type1"/>
    <property type="match status" value="1"/>
</dbReference>
<dbReference type="InterPro" id="IPR019998">
    <property type="entry name" value="Membr_insert_YidC"/>
</dbReference>
<dbReference type="InterPro" id="IPR028053">
    <property type="entry name" value="Membr_insert_YidC_N"/>
</dbReference>
<dbReference type="InterPro" id="IPR001708">
    <property type="entry name" value="YidC/ALB3/OXA1/COX18"/>
</dbReference>
<dbReference type="InterPro" id="IPR028055">
    <property type="entry name" value="YidC/Oxa/ALB_C"/>
</dbReference>
<dbReference type="InterPro" id="IPR047196">
    <property type="entry name" value="YidC_ALB_C"/>
</dbReference>
<dbReference type="InterPro" id="IPR038221">
    <property type="entry name" value="YidC_periplasmic_sf"/>
</dbReference>
<dbReference type="NCBIfam" id="NF002351">
    <property type="entry name" value="PRK01318.1-1"/>
    <property type="match status" value="1"/>
</dbReference>
<dbReference type="NCBIfam" id="NF002352">
    <property type="entry name" value="PRK01318.1-3"/>
    <property type="match status" value="1"/>
</dbReference>
<dbReference type="NCBIfam" id="TIGR03593">
    <property type="entry name" value="yidC_nterm"/>
    <property type="match status" value="1"/>
</dbReference>
<dbReference type="NCBIfam" id="TIGR03592">
    <property type="entry name" value="yidC_oxa1_cterm"/>
    <property type="match status" value="1"/>
</dbReference>
<dbReference type="PANTHER" id="PTHR12428:SF65">
    <property type="entry name" value="CYTOCHROME C OXIDASE ASSEMBLY PROTEIN COX18, MITOCHONDRIAL"/>
    <property type="match status" value="1"/>
</dbReference>
<dbReference type="PANTHER" id="PTHR12428">
    <property type="entry name" value="OXA1"/>
    <property type="match status" value="1"/>
</dbReference>
<dbReference type="Pfam" id="PF02096">
    <property type="entry name" value="60KD_IMP"/>
    <property type="match status" value="1"/>
</dbReference>
<dbReference type="Pfam" id="PF14849">
    <property type="entry name" value="YidC_periplas"/>
    <property type="match status" value="1"/>
</dbReference>
<dbReference type="PRINTS" id="PR00701">
    <property type="entry name" value="60KDINNERMP"/>
</dbReference>
<dbReference type="PRINTS" id="PR01900">
    <property type="entry name" value="YIDCPROTEIN"/>
</dbReference>
<evidence type="ECO:0000255" key="1">
    <source>
        <dbReference type="HAMAP-Rule" id="MF_01810"/>
    </source>
</evidence>